<name>KGUA_DEHM1</name>
<dbReference type="EC" id="2.7.4.8" evidence="1"/>
<dbReference type="EMBL" id="CP000027">
    <property type="protein sequence ID" value="AAW39120.1"/>
    <property type="molecule type" value="Genomic_DNA"/>
</dbReference>
<dbReference type="SMR" id="Q3ZAF9"/>
<dbReference type="FunCoup" id="Q3ZAF9">
    <property type="interactions" value="291"/>
</dbReference>
<dbReference type="STRING" id="243164.DET0035"/>
<dbReference type="KEGG" id="det:DET0035"/>
<dbReference type="eggNOG" id="COG0194">
    <property type="taxonomic scope" value="Bacteria"/>
</dbReference>
<dbReference type="HOGENOM" id="CLU_001715_1_2_0"/>
<dbReference type="InParanoid" id="Q3ZAF9"/>
<dbReference type="Proteomes" id="UP000008289">
    <property type="component" value="Chromosome"/>
</dbReference>
<dbReference type="GO" id="GO:0005829">
    <property type="term" value="C:cytosol"/>
    <property type="evidence" value="ECO:0007669"/>
    <property type="project" value="TreeGrafter"/>
</dbReference>
<dbReference type="GO" id="GO:0005524">
    <property type="term" value="F:ATP binding"/>
    <property type="evidence" value="ECO:0007669"/>
    <property type="project" value="UniProtKB-UniRule"/>
</dbReference>
<dbReference type="GO" id="GO:0004385">
    <property type="term" value="F:guanylate kinase activity"/>
    <property type="evidence" value="ECO:0007669"/>
    <property type="project" value="UniProtKB-UniRule"/>
</dbReference>
<dbReference type="CDD" id="cd00071">
    <property type="entry name" value="GMPK"/>
    <property type="match status" value="1"/>
</dbReference>
<dbReference type="FunFam" id="3.30.63.10:FF:000002">
    <property type="entry name" value="Guanylate kinase 1"/>
    <property type="match status" value="1"/>
</dbReference>
<dbReference type="Gene3D" id="3.30.63.10">
    <property type="entry name" value="Guanylate Kinase phosphate binding domain"/>
    <property type="match status" value="1"/>
</dbReference>
<dbReference type="Gene3D" id="3.40.50.300">
    <property type="entry name" value="P-loop containing nucleotide triphosphate hydrolases"/>
    <property type="match status" value="1"/>
</dbReference>
<dbReference type="HAMAP" id="MF_00328">
    <property type="entry name" value="Guanylate_kinase"/>
    <property type="match status" value="1"/>
</dbReference>
<dbReference type="InterPro" id="IPR008145">
    <property type="entry name" value="GK/Ca_channel_bsu"/>
</dbReference>
<dbReference type="InterPro" id="IPR008144">
    <property type="entry name" value="Guanylate_kin-like_dom"/>
</dbReference>
<dbReference type="InterPro" id="IPR017665">
    <property type="entry name" value="Guanylate_kinase"/>
</dbReference>
<dbReference type="InterPro" id="IPR020590">
    <property type="entry name" value="Guanylate_kinase_CS"/>
</dbReference>
<dbReference type="InterPro" id="IPR027417">
    <property type="entry name" value="P-loop_NTPase"/>
</dbReference>
<dbReference type="NCBIfam" id="TIGR03263">
    <property type="entry name" value="guanyl_kin"/>
    <property type="match status" value="1"/>
</dbReference>
<dbReference type="NCBIfam" id="NF011325">
    <property type="entry name" value="PRK14738.1"/>
    <property type="match status" value="1"/>
</dbReference>
<dbReference type="PANTHER" id="PTHR23117:SF13">
    <property type="entry name" value="GUANYLATE KINASE"/>
    <property type="match status" value="1"/>
</dbReference>
<dbReference type="PANTHER" id="PTHR23117">
    <property type="entry name" value="GUANYLATE KINASE-RELATED"/>
    <property type="match status" value="1"/>
</dbReference>
<dbReference type="Pfam" id="PF00625">
    <property type="entry name" value="Guanylate_kin"/>
    <property type="match status" value="1"/>
</dbReference>
<dbReference type="SMART" id="SM00072">
    <property type="entry name" value="GuKc"/>
    <property type="match status" value="1"/>
</dbReference>
<dbReference type="SUPFAM" id="SSF52540">
    <property type="entry name" value="P-loop containing nucleoside triphosphate hydrolases"/>
    <property type="match status" value="1"/>
</dbReference>
<dbReference type="PROSITE" id="PS00856">
    <property type="entry name" value="GUANYLATE_KINASE_1"/>
    <property type="match status" value="1"/>
</dbReference>
<dbReference type="PROSITE" id="PS50052">
    <property type="entry name" value="GUANYLATE_KINASE_2"/>
    <property type="match status" value="1"/>
</dbReference>
<keyword id="KW-0067">ATP-binding</keyword>
<keyword id="KW-0963">Cytoplasm</keyword>
<keyword id="KW-0418">Kinase</keyword>
<keyword id="KW-0547">Nucleotide-binding</keyword>
<keyword id="KW-0808">Transferase</keyword>
<organism>
    <name type="scientific">Dehalococcoides mccartyi (strain ATCC BAA-2266 / KCTC 15142 / 195)</name>
    <name type="common">Dehalococcoides ethenogenes (strain 195)</name>
    <dbReference type="NCBI Taxonomy" id="243164"/>
    <lineage>
        <taxon>Bacteria</taxon>
        <taxon>Bacillati</taxon>
        <taxon>Chloroflexota</taxon>
        <taxon>Dehalococcoidia</taxon>
        <taxon>Dehalococcoidales</taxon>
        <taxon>Dehalococcoidaceae</taxon>
        <taxon>Dehalococcoides</taxon>
    </lineage>
</organism>
<protein>
    <recommendedName>
        <fullName evidence="1">Guanylate kinase</fullName>
        <ecNumber evidence="1">2.7.4.8</ecNumber>
    </recommendedName>
    <alternativeName>
        <fullName evidence="1">GMP kinase</fullName>
    </alternativeName>
</protein>
<feature type="chain" id="PRO_0000266314" description="Guanylate kinase">
    <location>
        <begin position="1"/>
        <end position="206"/>
    </location>
</feature>
<feature type="domain" description="Guanylate kinase-like" evidence="1">
    <location>
        <begin position="13"/>
        <end position="193"/>
    </location>
</feature>
<feature type="binding site" evidence="1">
    <location>
        <begin position="20"/>
        <end position="27"/>
    </location>
    <ligand>
        <name>ATP</name>
        <dbReference type="ChEBI" id="CHEBI:30616"/>
    </ligand>
</feature>
<reference key="1">
    <citation type="journal article" date="2005" name="Science">
        <title>Genome sequence of the PCE-dechlorinating bacterium Dehalococcoides ethenogenes.</title>
        <authorList>
            <person name="Seshadri R."/>
            <person name="Adrian L."/>
            <person name="Fouts D.E."/>
            <person name="Eisen J.A."/>
            <person name="Phillippy A.M."/>
            <person name="Methe B.A."/>
            <person name="Ward N.L."/>
            <person name="Nelson W.C."/>
            <person name="DeBoy R.T."/>
            <person name="Khouri H.M."/>
            <person name="Kolonay J.F."/>
            <person name="Dodson R.J."/>
            <person name="Daugherty S.C."/>
            <person name="Brinkac L.M."/>
            <person name="Sullivan S.A."/>
            <person name="Madupu R."/>
            <person name="Nelson K.E."/>
            <person name="Kang K.H."/>
            <person name="Impraim M."/>
            <person name="Tran K."/>
            <person name="Robinson J.M."/>
            <person name="Forberger H.A."/>
            <person name="Fraser C.M."/>
            <person name="Zinder S.H."/>
            <person name="Heidelberg J.F."/>
        </authorList>
    </citation>
    <scope>NUCLEOTIDE SEQUENCE [LARGE SCALE GENOMIC DNA]</scope>
    <source>
        <strain>ATCC BAA-2266 / KCTC 15142 / 195</strain>
    </source>
</reference>
<gene>
    <name evidence="1" type="primary">gmk</name>
    <name type="ordered locus">DET0035</name>
</gene>
<accession>Q3ZAF9</accession>
<evidence type="ECO:0000255" key="1">
    <source>
        <dbReference type="HAMAP-Rule" id="MF_00328"/>
    </source>
</evidence>
<proteinExistence type="inferred from homology"/>
<comment type="function">
    <text evidence="1">Essential for recycling GMP and indirectly, cGMP.</text>
</comment>
<comment type="catalytic activity">
    <reaction evidence="1">
        <text>GMP + ATP = GDP + ADP</text>
        <dbReference type="Rhea" id="RHEA:20780"/>
        <dbReference type="ChEBI" id="CHEBI:30616"/>
        <dbReference type="ChEBI" id="CHEBI:58115"/>
        <dbReference type="ChEBI" id="CHEBI:58189"/>
        <dbReference type="ChEBI" id="CHEBI:456216"/>
        <dbReference type="EC" id="2.7.4.8"/>
    </reaction>
</comment>
<comment type="subcellular location">
    <subcellularLocation>
        <location evidence="1">Cytoplasm</location>
    </subcellularLocation>
</comment>
<comment type="similarity">
    <text evidence="1">Belongs to the guanylate kinase family.</text>
</comment>
<sequence length="206" mass="23246">MMTNWNFNKANKPLLLVVSGPSGVGKDAVLARMKERKLPLAYIVTTTTRTKREKETEGVDYNFIRPAEFQQLIGQNELLEWANVYGNFYGVPKAPIRQALAHGFDVIVKVDVQGAASIKKIVPNAVFIFLMPPDMDELTRRLEHRLTESPESLKRRLATAPLEIEKLPDFDYVVVNPEGEIDNAVSEIMSIISAEHCRINPRSIEL</sequence>